<evidence type="ECO:0000250" key="1"/>
<evidence type="ECO:0000305" key="2"/>
<keyword id="KW-0028">Amino-acid biosynthesis</keyword>
<keyword id="KW-0368">Histidine biosynthesis</keyword>
<keyword id="KW-0428">Leader peptide</keyword>
<feature type="peptide" id="PRO_0000043989" description="his operon leader peptide">
    <location>
        <begin position="1"/>
        <end position="16"/>
    </location>
</feature>
<accession>Q48439</accession>
<protein>
    <recommendedName>
        <fullName>his operon leader peptide</fullName>
    </recommendedName>
    <alternativeName>
        <fullName>his operon attenuator peptide</fullName>
    </alternativeName>
</protein>
<comment type="function">
    <text evidence="1">This protein is involved in the attenuation mechanism for the control of the expression of the his operon structural genes.</text>
</comment>
<comment type="similarity">
    <text evidence="2">Belongs to the HisL family.</text>
</comment>
<proteinExistence type="inferred from homology"/>
<gene>
    <name type="primary">hisL</name>
</gene>
<organism>
    <name type="scientific">Klebsiella pneumoniae</name>
    <dbReference type="NCBI Taxonomy" id="573"/>
    <lineage>
        <taxon>Bacteria</taxon>
        <taxon>Pseudomonadati</taxon>
        <taxon>Pseudomonadota</taxon>
        <taxon>Gammaproteobacteria</taxon>
        <taxon>Enterobacterales</taxon>
        <taxon>Enterobacteriaceae</taxon>
        <taxon>Klebsiella/Raoultella group</taxon>
        <taxon>Klebsiella</taxon>
        <taxon>Klebsiella pneumoniae complex</taxon>
    </lineage>
</organism>
<name>LPHI_KLEPN</name>
<dbReference type="EMBL" id="K01997">
    <property type="protein sequence ID" value="AAA25072.1"/>
    <property type="molecule type" value="Genomic_DNA"/>
</dbReference>
<dbReference type="GO" id="GO:0000105">
    <property type="term" value="P:L-histidine biosynthetic process"/>
    <property type="evidence" value="ECO:0007669"/>
    <property type="project" value="UniProtKB-KW"/>
</dbReference>
<dbReference type="InterPro" id="IPR012565">
    <property type="entry name" value="His_leader"/>
</dbReference>
<dbReference type="Pfam" id="PF08047">
    <property type="entry name" value="His_leader"/>
    <property type="match status" value="1"/>
</dbReference>
<sequence>MNSVQFKNHHHHHHPD</sequence>
<reference key="1">
    <citation type="journal article" date="1984" name="J. Bacteriol.">
        <title>Histidine operon control region of Klebsiella pneumoniae: analysis with an Escherichia coli promoter-probe plasmid vector.</title>
        <authorList>
            <person name="Rodriguez R.L."/>
            <person name="West R.W. Jr."/>
        </authorList>
    </citation>
    <scope>NUCLEOTIDE SEQUENCE [GENOMIC DNA]</scope>
</reference>